<protein>
    <recommendedName>
        <fullName>Citrate synthase</fullName>
        <ecNumber>2.3.3.16</ecNumber>
    </recommendedName>
</protein>
<feature type="chain" id="PRO_0000169935" description="Citrate synthase">
    <location>
        <begin position="1"/>
        <end position="438"/>
    </location>
</feature>
<feature type="active site" evidence="1">
    <location>
        <position position="306"/>
    </location>
</feature>
<feature type="active site" evidence="1">
    <location>
        <position position="364"/>
    </location>
</feature>
<feature type="sequence conflict" description="In Ref. 2; CAA93836." evidence="2" ref="2">
    <original>Q</original>
    <variation>R</variation>
    <location>
        <position position="117"/>
    </location>
</feature>
<feature type="sequence conflict" description="In Ref. 2; CAA93836." evidence="2" ref="2">
    <original>F</original>
    <variation>C</variation>
    <location>
        <position position="224"/>
    </location>
</feature>
<keyword id="KW-0808">Transferase</keyword>
<keyword id="KW-0816">Tricarboxylic acid cycle</keyword>
<comment type="catalytic activity">
    <reaction evidence="1">
        <text>oxaloacetate + acetyl-CoA + H2O = citrate + CoA + H(+)</text>
        <dbReference type="Rhea" id="RHEA:16845"/>
        <dbReference type="ChEBI" id="CHEBI:15377"/>
        <dbReference type="ChEBI" id="CHEBI:15378"/>
        <dbReference type="ChEBI" id="CHEBI:16452"/>
        <dbReference type="ChEBI" id="CHEBI:16947"/>
        <dbReference type="ChEBI" id="CHEBI:57287"/>
        <dbReference type="ChEBI" id="CHEBI:57288"/>
        <dbReference type="EC" id="2.3.3.16"/>
    </reaction>
</comment>
<comment type="pathway">
    <text>Carbohydrate metabolism; tricarboxylic acid cycle; isocitrate from oxaloacetate: step 1/2.</text>
</comment>
<comment type="miscellaneous">
    <text>Citrate synthase is found in nearly all cells capable of oxidative metabolism.</text>
</comment>
<comment type="similarity">
    <text evidence="2">Belongs to the citrate synthase family.</text>
</comment>
<name>CISY_BARQU</name>
<sequence length="438" mass="49464">MSENKAHITVNNKKIELSVRKGTLGPGVIEIASLYKETDTFTYDPGFTSTASCESKITYIDGDKGILLYCGYPIDQLAEKGDFLESCYLLLYGELPTKQEKIDFDRCIMQHMMVHEQFTRFFHGFRRDSHPMAVMVACLGAMSAFYHDSIDIKDAQQRMIAAIRLISKVPTLAAMAYKYSIGQAFVYPRNDLSYAANFLHMCFSVPCEEYKINPVLSRAMDRIFTLHADHEQNASTSTVRLVGSSGANPFACIAAGVACLWGPAHGGANEACLKMLQKIGSVERIPEFIARAKDKNDPFRLMGFGHRVYKNYDPRAKIMQQTCHEVLKELNIQDDPLLDIAIALENTALNDEYFIEKKLYPNVDFYSGITLKALGFPTEMFTVLFALARSIGWVAQWKEMIEDPAQKIGRPRQLYTGYAAREYVSIDKRISKNKMTTQ</sequence>
<dbReference type="EC" id="2.3.3.16"/>
<dbReference type="EMBL" id="BX897700">
    <property type="protein sequence ID" value="CAF26174.1"/>
    <property type="molecule type" value="Genomic_DNA"/>
</dbReference>
<dbReference type="EMBL" id="Z70014">
    <property type="protein sequence ID" value="CAA93836.1"/>
    <property type="molecule type" value="Genomic_DNA"/>
</dbReference>
<dbReference type="EMBL" id="U28073">
    <property type="protein sequence ID" value="AAA74978.1"/>
    <property type="molecule type" value="Genomic_DNA"/>
</dbReference>
<dbReference type="RefSeq" id="WP_011179429.1">
    <property type="nucleotide sequence ID" value="NC_005955.1"/>
</dbReference>
<dbReference type="SMR" id="P51034"/>
<dbReference type="KEGG" id="bqu:BQ06850"/>
<dbReference type="eggNOG" id="COG0372">
    <property type="taxonomic scope" value="Bacteria"/>
</dbReference>
<dbReference type="HOGENOM" id="CLU_025068_0_0_5"/>
<dbReference type="OrthoDB" id="9800864at2"/>
<dbReference type="UniPathway" id="UPA00223">
    <property type="reaction ID" value="UER00717"/>
</dbReference>
<dbReference type="Proteomes" id="UP000000597">
    <property type="component" value="Chromosome"/>
</dbReference>
<dbReference type="GO" id="GO:0005737">
    <property type="term" value="C:cytoplasm"/>
    <property type="evidence" value="ECO:0007669"/>
    <property type="project" value="InterPro"/>
</dbReference>
<dbReference type="GO" id="GO:0004108">
    <property type="term" value="F:citrate (Si)-synthase activity"/>
    <property type="evidence" value="ECO:0007669"/>
    <property type="project" value="InterPro"/>
</dbReference>
<dbReference type="GO" id="GO:0006099">
    <property type="term" value="P:tricarboxylic acid cycle"/>
    <property type="evidence" value="ECO:0007669"/>
    <property type="project" value="UniProtKB-UniPathway"/>
</dbReference>
<dbReference type="CDD" id="cd06114">
    <property type="entry name" value="EcCS_like"/>
    <property type="match status" value="1"/>
</dbReference>
<dbReference type="FunFam" id="1.10.230.10:FF:000002">
    <property type="entry name" value="Citrate synthase"/>
    <property type="match status" value="1"/>
</dbReference>
<dbReference type="Gene3D" id="2.20.28.60">
    <property type="match status" value="1"/>
</dbReference>
<dbReference type="Gene3D" id="1.10.580.10">
    <property type="entry name" value="Citrate Synthase, domain 1"/>
    <property type="match status" value="1"/>
</dbReference>
<dbReference type="Gene3D" id="1.10.230.10">
    <property type="entry name" value="Cytochrome P450-Terp, domain 2"/>
    <property type="match status" value="1"/>
</dbReference>
<dbReference type="InterPro" id="IPR016142">
    <property type="entry name" value="Citrate_synth-like_lrg_a-sub"/>
</dbReference>
<dbReference type="InterPro" id="IPR016143">
    <property type="entry name" value="Citrate_synth-like_sm_a-sub"/>
</dbReference>
<dbReference type="InterPro" id="IPR002020">
    <property type="entry name" value="Citrate_synthase"/>
</dbReference>
<dbReference type="InterPro" id="IPR019810">
    <property type="entry name" value="Citrate_synthase_AS"/>
</dbReference>
<dbReference type="InterPro" id="IPR024176">
    <property type="entry name" value="Citrate_synthase_bac-typ"/>
</dbReference>
<dbReference type="InterPro" id="IPR036969">
    <property type="entry name" value="Citrate_synthase_sf"/>
</dbReference>
<dbReference type="InterPro" id="IPR010953">
    <property type="entry name" value="Citrate_synthase_typ-I"/>
</dbReference>
<dbReference type="NCBIfam" id="TIGR01798">
    <property type="entry name" value="cit_synth_I"/>
    <property type="match status" value="1"/>
</dbReference>
<dbReference type="NCBIfam" id="NF004126">
    <property type="entry name" value="PRK05614.1"/>
    <property type="match status" value="1"/>
</dbReference>
<dbReference type="PANTHER" id="PTHR42871">
    <property type="entry name" value="CITRATE SYNTHASE"/>
    <property type="match status" value="1"/>
</dbReference>
<dbReference type="PANTHER" id="PTHR42871:SF1">
    <property type="entry name" value="CITRATE SYNTHASE"/>
    <property type="match status" value="1"/>
</dbReference>
<dbReference type="Pfam" id="PF00285">
    <property type="entry name" value="Citrate_synt"/>
    <property type="match status" value="1"/>
</dbReference>
<dbReference type="PIRSF" id="PIRSF001369">
    <property type="entry name" value="Citrate_synth"/>
    <property type="match status" value="1"/>
</dbReference>
<dbReference type="PRINTS" id="PR00143">
    <property type="entry name" value="CITRTSNTHASE"/>
</dbReference>
<dbReference type="SUPFAM" id="SSF48256">
    <property type="entry name" value="Citrate synthase"/>
    <property type="match status" value="1"/>
</dbReference>
<dbReference type="PROSITE" id="PS00480">
    <property type="entry name" value="CITRATE_SYNTHASE"/>
    <property type="match status" value="1"/>
</dbReference>
<proteinExistence type="inferred from homology"/>
<accession>P51034</accession>
<accession>Q6FZN8</accession>
<organism>
    <name type="scientific">Bartonella quintana (strain Toulouse)</name>
    <name type="common">Rochalimaea quintana</name>
    <dbReference type="NCBI Taxonomy" id="283165"/>
    <lineage>
        <taxon>Bacteria</taxon>
        <taxon>Pseudomonadati</taxon>
        <taxon>Pseudomonadota</taxon>
        <taxon>Alphaproteobacteria</taxon>
        <taxon>Hyphomicrobiales</taxon>
        <taxon>Bartonellaceae</taxon>
        <taxon>Bartonella</taxon>
    </lineage>
</organism>
<reference key="1">
    <citation type="journal article" date="2004" name="Proc. Natl. Acad. Sci. U.S.A.">
        <title>The louse-borne human pathogen Bartonella quintana is a genomic derivative of the zoonotic agent Bartonella henselae.</title>
        <authorList>
            <person name="Alsmark U.C.M."/>
            <person name="Frank A.C."/>
            <person name="Karlberg E.O."/>
            <person name="Legault B.-A."/>
            <person name="Ardell D.H."/>
            <person name="Canbaeck B."/>
            <person name="Eriksson A.-S."/>
            <person name="Naeslund A.K."/>
            <person name="Handley S.A."/>
            <person name="Huvet M."/>
            <person name="La Scola B."/>
            <person name="Holmberg M."/>
            <person name="Andersson S.G.E."/>
        </authorList>
    </citation>
    <scope>NUCLEOTIDE SEQUENCE [LARGE SCALE GENOMIC DNA]</scope>
    <source>
        <strain>Toulouse</strain>
    </source>
</reference>
<reference key="2">
    <citation type="journal article" date="1996" name="Int. J. Syst. Bacteriol.">
        <title>Comparison of partial citrate synthase gene (gltA) sequences for phylogenetic analysis of Bartonella species.</title>
        <authorList>
            <person name="Birtles R.J."/>
            <person name="Raoult D."/>
        </authorList>
    </citation>
    <scope>NUCLEOTIDE SEQUENCE [GENOMIC DNA] OF 60-379</scope>
    <source>
        <strain>ATCC VR-358 / Fuller / CIP 107027</strain>
    </source>
</reference>
<reference key="3">
    <citation type="submission" date="1995-05" db="EMBL/GenBank/DDBJ databases">
        <title>Bartonella species characterization: citrate synthase (gltA) PCR product sequence analysis.</title>
        <authorList>
            <person name="Jones D.C."/>
            <person name="Regnery R."/>
            <person name="Bowen M."/>
        </authorList>
    </citation>
    <scope>NUCLEOTIDE SEQUENCE [GENOMIC DNA] OF 268-379</scope>
    <source>
        <strain>ATCC VR-358 / Fuller / CIP 107027</strain>
    </source>
</reference>
<gene>
    <name type="primary">gltA</name>
    <name type="ordered locus">BQ06850</name>
</gene>
<evidence type="ECO:0000255" key="1">
    <source>
        <dbReference type="PROSITE-ProRule" id="PRU10117"/>
    </source>
</evidence>
<evidence type="ECO:0000305" key="2"/>